<keyword id="KW-0002">3D-structure</keyword>
<keyword id="KW-0235">DNA replication</keyword>
<keyword id="KW-0539">Nucleus</keyword>
<keyword id="KW-0597">Phosphoprotein</keyword>
<keyword id="KW-1185">Reference proteome</keyword>
<evidence type="ECO:0000256" key="1">
    <source>
        <dbReference type="SAM" id="MobiDB-lite"/>
    </source>
</evidence>
<evidence type="ECO:0000269" key="2">
    <source>
    </source>
</evidence>
<evidence type="ECO:0000269" key="3">
    <source>
    </source>
</evidence>
<evidence type="ECO:0000269" key="4">
    <source>
    </source>
</evidence>
<evidence type="ECO:0000305" key="5"/>
<evidence type="ECO:0007744" key="6">
    <source>
    </source>
</evidence>
<evidence type="ECO:0007744" key="7">
    <source>
    </source>
</evidence>
<evidence type="ECO:0007744" key="8">
    <source>
    </source>
</evidence>
<evidence type="ECO:0007829" key="9">
    <source>
        <dbReference type="PDB" id="6WJV"/>
    </source>
</evidence>
<organism>
    <name type="scientific">Saccharomyces cerevisiae (strain ATCC 204508 / S288c)</name>
    <name type="common">Baker's yeast</name>
    <dbReference type="NCBI Taxonomy" id="559292"/>
    <lineage>
        <taxon>Eukaryota</taxon>
        <taxon>Fungi</taxon>
        <taxon>Dikarya</taxon>
        <taxon>Ascomycota</taxon>
        <taxon>Saccharomycotina</taxon>
        <taxon>Saccharomycetes</taxon>
        <taxon>Saccharomycetales</taxon>
        <taxon>Saccharomycetaceae</taxon>
        <taxon>Saccharomyces</taxon>
    </lineage>
</organism>
<sequence>MSNLVKEKAPVFPISKVKKIAKCDPEYVITSNVAISATAFAAELFVQNLVEESLVLAQLNSKGKTSLRLSLNSIEECVEKRDNFRFLEDAIKQLKKNSALDKKRELNMQPGRSDQEVVIEEPELHEDDGVEEEEEEDEVSEEEEPVHNEELLDDSKDQQNDKSTRSVASLLSRFQYKSALDVGEHSDSSDIEVDHTKSTDP</sequence>
<proteinExistence type="evidence at protein level"/>
<gene>
    <name type="primary">DPB3</name>
    <name type="ordered locus">YBR278W</name>
    <name type="ORF">YBR2015</name>
</gene>
<reference key="1">
    <citation type="journal article" date="1991" name="Nucleic Acids Res.">
        <title>Cloning DPB3, the gene encoding the third subunit of DNA polymerase II of Saccharomyces cerevisiae.</title>
        <authorList>
            <person name="Araki H."/>
            <person name="Hamatake R.K."/>
            <person name="Morrison A."/>
            <person name="Johnson A.L."/>
            <person name="Johnston L.H."/>
            <person name="Sugino A."/>
        </authorList>
    </citation>
    <scope>NUCLEOTIDE SEQUENCE [GENOMIC DNA]</scope>
    <source>
        <strain>ATCC 204626 / S288c / A364A</strain>
    </source>
</reference>
<reference key="2">
    <citation type="journal article" date="1994" name="Yeast">
        <title>The sequence of a 32,420 bp segment located on the right arm of chromosome II from Saccharomyces cerevisiae.</title>
        <authorList>
            <person name="Holmstroem K."/>
            <person name="Brandt T."/>
            <person name="Kallesoe T."/>
        </authorList>
    </citation>
    <scope>NUCLEOTIDE SEQUENCE [GENOMIC DNA]</scope>
    <source>
        <strain>ATCC 204508 / S288c</strain>
    </source>
</reference>
<reference key="3">
    <citation type="journal article" date="1994" name="EMBO J.">
        <title>Complete DNA sequence of yeast chromosome II.</title>
        <authorList>
            <person name="Feldmann H."/>
            <person name="Aigle M."/>
            <person name="Aljinovic G."/>
            <person name="Andre B."/>
            <person name="Baclet M.C."/>
            <person name="Barthe C."/>
            <person name="Baur A."/>
            <person name="Becam A.-M."/>
            <person name="Biteau N."/>
            <person name="Boles E."/>
            <person name="Brandt T."/>
            <person name="Brendel M."/>
            <person name="Brueckner M."/>
            <person name="Bussereau F."/>
            <person name="Christiansen C."/>
            <person name="Contreras R."/>
            <person name="Crouzet M."/>
            <person name="Cziepluch C."/>
            <person name="Demolis N."/>
            <person name="Delaveau T."/>
            <person name="Doignon F."/>
            <person name="Domdey H."/>
            <person name="Duesterhus S."/>
            <person name="Dubois E."/>
            <person name="Dujon B."/>
            <person name="El Bakkoury M."/>
            <person name="Entian K.-D."/>
            <person name="Feuermann M."/>
            <person name="Fiers W."/>
            <person name="Fobo G.M."/>
            <person name="Fritz C."/>
            <person name="Gassenhuber J."/>
            <person name="Glansdorff N."/>
            <person name="Goffeau A."/>
            <person name="Grivell L.A."/>
            <person name="de Haan M."/>
            <person name="Hein C."/>
            <person name="Herbert C.J."/>
            <person name="Hollenberg C.P."/>
            <person name="Holmstroem K."/>
            <person name="Jacq C."/>
            <person name="Jacquet M."/>
            <person name="Jauniaux J.-C."/>
            <person name="Jonniaux J.-L."/>
            <person name="Kallesoee T."/>
            <person name="Kiesau P."/>
            <person name="Kirchrath L."/>
            <person name="Koetter P."/>
            <person name="Korol S."/>
            <person name="Liebl S."/>
            <person name="Logghe M."/>
            <person name="Lohan A.J.E."/>
            <person name="Louis E.J."/>
            <person name="Li Z.Y."/>
            <person name="Maat M.J."/>
            <person name="Mallet L."/>
            <person name="Mannhaupt G."/>
            <person name="Messenguy F."/>
            <person name="Miosga T."/>
            <person name="Molemans F."/>
            <person name="Mueller S."/>
            <person name="Nasr F."/>
            <person name="Obermaier B."/>
            <person name="Perea J."/>
            <person name="Pierard A."/>
            <person name="Piravandi E."/>
            <person name="Pohl F.M."/>
            <person name="Pohl T.M."/>
            <person name="Potier S."/>
            <person name="Proft M."/>
            <person name="Purnelle B."/>
            <person name="Ramezani Rad M."/>
            <person name="Rieger M."/>
            <person name="Rose M."/>
            <person name="Schaaff-Gerstenschlaeger I."/>
            <person name="Scherens B."/>
            <person name="Schwarzlose C."/>
            <person name="Skala J."/>
            <person name="Slonimski P.P."/>
            <person name="Smits P.H.M."/>
            <person name="Souciet J.-L."/>
            <person name="Steensma H.Y."/>
            <person name="Stucka R."/>
            <person name="Urrestarazu L.A."/>
            <person name="van der Aart Q.J.M."/>
            <person name="Van Dyck L."/>
            <person name="Vassarotti A."/>
            <person name="Vetter I."/>
            <person name="Vierendeels F."/>
            <person name="Vissers S."/>
            <person name="Wagner G."/>
            <person name="de Wergifosse P."/>
            <person name="Wolfe K.H."/>
            <person name="Zagulski M."/>
            <person name="Zimmermann F.K."/>
            <person name="Mewes H.-W."/>
            <person name="Kleine K."/>
        </authorList>
    </citation>
    <scope>NUCLEOTIDE SEQUENCE [LARGE SCALE GENOMIC DNA]</scope>
    <source>
        <strain>ATCC 204508 / S288c</strain>
    </source>
</reference>
<reference key="4">
    <citation type="journal article" date="2014" name="G3 (Bethesda)">
        <title>The reference genome sequence of Saccharomyces cerevisiae: Then and now.</title>
        <authorList>
            <person name="Engel S.R."/>
            <person name="Dietrich F.S."/>
            <person name="Fisk D.G."/>
            <person name="Binkley G."/>
            <person name="Balakrishnan R."/>
            <person name="Costanzo M.C."/>
            <person name="Dwight S.S."/>
            <person name="Hitz B.C."/>
            <person name="Karra K."/>
            <person name="Nash R.S."/>
            <person name="Weng S."/>
            <person name="Wong E.D."/>
            <person name="Lloyd P."/>
            <person name="Skrzypek M.S."/>
            <person name="Miyasato S.R."/>
            <person name="Simison M."/>
            <person name="Cherry J.M."/>
        </authorList>
    </citation>
    <scope>GENOME REANNOTATION</scope>
    <source>
        <strain>ATCC 204508 / S288c</strain>
    </source>
</reference>
<reference key="5">
    <citation type="journal article" date="2000" name="Nucleic Acids Res.">
        <title>Structure and function of the fourth subunit (Dpb4p) of DNA polymerase epsilon in Saccharomyces cerevisiae.</title>
        <authorList>
            <person name="Ohya T."/>
            <person name="Maki S."/>
            <person name="Kawasaki Y."/>
            <person name="Sugino A."/>
        </authorList>
    </citation>
    <scope>SUBUNIT</scope>
    <scope>SUBCELLULAR LOCATION</scope>
</reference>
<reference key="6">
    <citation type="journal article" date="2002" name="J. Biol. Chem.">
        <title>Fidelity of DNA polymerase epsilon holoenzyme from budding yeast Saccharomyces cerevisiae.</title>
        <authorList>
            <person name="Shimizu K."/>
            <person name="Hashimoto K."/>
            <person name="Kirchner J.M."/>
            <person name="Nakai W."/>
            <person name="Nishikawa H."/>
            <person name="Resnick M.A."/>
            <person name="Sugino A."/>
        </authorList>
    </citation>
    <scope>FUNCTION</scope>
</reference>
<reference key="7">
    <citation type="journal article" date="2003" name="J. Biol. Chem.">
        <title>The quaternary structure of DNA polymerase epsilon from Saccharomyces cerevisiae.</title>
        <authorList>
            <person name="Chilkova O."/>
            <person name="Jonsson B.-H."/>
            <person name="Johansson E."/>
        </authorList>
    </citation>
    <scope>COMPOSITION OF THE DNA POLYMERASE EPSILON COMPLEX</scope>
</reference>
<reference key="8">
    <citation type="journal article" date="2003" name="Nature">
        <title>Global analysis of protein expression in yeast.</title>
        <authorList>
            <person name="Ghaemmaghami S."/>
            <person name="Huh W.-K."/>
            <person name="Bower K."/>
            <person name="Howson R.W."/>
            <person name="Belle A."/>
            <person name="Dephoure N."/>
            <person name="O'Shea E.K."/>
            <person name="Weissman J.S."/>
        </authorList>
    </citation>
    <scope>LEVEL OF PROTEIN EXPRESSION [LARGE SCALE ANALYSIS]</scope>
</reference>
<reference key="9">
    <citation type="journal article" date="2007" name="J. Proteome Res.">
        <title>Large-scale phosphorylation analysis of alpha-factor-arrested Saccharomyces cerevisiae.</title>
        <authorList>
            <person name="Li X."/>
            <person name="Gerber S.A."/>
            <person name="Rudner A.D."/>
            <person name="Beausoleil S.A."/>
            <person name="Haas W."/>
            <person name="Villen J."/>
            <person name="Elias J.E."/>
            <person name="Gygi S.P."/>
        </authorList>
    </citation>
    <scope>PHOSPHORYLATION [LARGE SCALE ANALYSIS] AT SER-186</scope>
    <scope>IDENTIFICATION BY MASS SPECTROMETRY [LARGE SCALE ANALYSIS]</scope>
    <source>
        <strain>ADR376</strain>
    </source>
</reference>
<reference key="10">
    <citation type="journal article" date="2007" name="Proc. Natl. Acad. Sci. U.S.A.">
        <title>Analysis of phosphorylation sites on proteins from Saccharomyces cerevisiae by electron transfer dissociation (ETD) mass spectrometry.</title>
        <authorList>
            <person name="Chi A."/>
            <person name="Huttenhower C."/>
            <person name="Geer L.Y."/>
            <person name="Coon J.J."/>
            <person name="Syka J.E.P."/>
            <person name="Bai D.L."/>
            <person name="Shabanowitz J."/>
            <person name="Burke D.J."/>
            <person name="Troyanskaya O.G."/>
            <person name="Hunt D.F."/>
        </authorList>
    </citation>
    <scope>IDENTIFICATION BY MASS SPECTROMETRY [LARGE SCALE ANALYSIS]</scope>
</reference>
<reference key="11">
    <citation type="journal article" date="2008" name="Mol. Cell. Proteomics">
        <title>A multidimensional chromatography technology for in-depth phosphoproteome analysis.</title>
        <authorList>
            <person name="Albuquerque C.P."/>
            <person name="Smolka M.B."/>
            <person name="Payne S.H."/>
            <person name="Bafna V."/>
            <person name="Eng J."/>
            <person name="Zhou H."/>
        </authorList>
    </citation>
    <scope>PHOSPHORYLATION [LARGE SCALE ANALYSIS] AT SER-186</scope>
    <scope>IDENTIFICATION BY MASS SPECTROMETRY [LARGE SCALE ANALYSIS]</scope>
</reference>
<reference key="12">
    <citation type="journal article" date="2009" name="Science">
        <title>Global analysis of Cdk1 substrate phosphorylation sites provides insights into evolution.</title>
        <authorList>
            <person name="Holt L.J."/>
            <person name="Tuch B.B."/>
            <person name="Villen J."/>
            <person name="Johnson A.D."/>
            <person name="Gygi S.P."/>
            <person name="Morgan D.O."/>
        </authorList>
    </citation>
    <scope>PHOSPHORYLATION [LARGE SCALE ANALYSIS] AT SER-186; SER-188 AND SER-189</scope>
    <scope>IDENTIFICATION BY MASS SPECTROMETRY [LARGE SCALE ANALYSIS]</scope>
</reference>
<feature type="chain" id="PRO_0000208350" description="DNA polymerase epsilon subunit C">
    <location>
        <begin position="1"/>
        <end position="201"/>
    </location>
</feature>
<feature type="region of interest" description="Disordered" evidence="1">
    <location>
        <begin position="102"/>
        <end position="165"/>
    </location>
</feature>
<feature type="region of interest" description="Disordered" evidence="1">
    <location>
        <begin position="178"/>
        <end position="201"/>
    </location>
</feature>
<feature type="compositionally biased region" description="Acidic residues" evidence="1">
    <location>
        <begin position="117"/>
        <end position="144"/>
    </location>
</feature>
<feature type="compositionally biased region" description="Basic and acidic residues" evidence="1">
    <location>
        <begin position="145"/>
        <end position="164"/>
    </location>
</feature>
<feature type="compositionally biased region" description="Basic and acidic residues" evidence="1">
    <location>
        <begin position="182"/>
        <end position="201"/>
    </location>
</feature>
<feature type="modified residue" description="Phosphoserine" evidence="6 7 8">
    <location>
        <position position="186"/>
    </location>
</feature>
<feature type="modified residue" description="Phosphoserine" evidence="8">
    <location>
        <position position="188"/>
    </location>
</feature>
<feature type="modified residue" description="Phosphoserine" evidence="8">
    <location>
        <position position="189"/>
    </location>
</feature>
<feature type="sequence conflict" description="In Ref. 1; CAA41403." evidence="5" ref="1">
    <original>T</original>
    <variation>M</variation>
    <location>
        <position position="196"/>
    </location>
</feature>
<feature type="helix" evidence="9">
    <location>
        <begin position="14"/>
        <end position="19"/>
    </location>
</feature>
<feature type="helix" evidence="9">
    <location>
        <begin position="34"/>
        <end position="52"/>
    </location>
</feature>
<feature type="turn" evidence="9">
    <location>
        <begin position="53"/>
        <end position="55"/>
    </location>
</feature>
<feature type="strand" evidence="9">
    <location>
        <begin position="56"/>
        <end position="60"/>
    </location>
</feature>
<feature type="strand" evidence="9">
    <location>
        <begin position="62"/>
        <end position="64"/>
    </location>
</feature>
<feature type="helix" evidence="9">
    <location>
        <begin position="71"/>
        <end position="80"/>
    </location>
</feature>
<feature type="turn" evidence="9">
    <location>
        <begin position="83"/>
        <end position="86"/>
    </location>
</feature>
<comment type="function">
    <text evidence="3">As accessory component of the DNA polymerase epsilon (DNA polymerase II) participates in chromosomal DNA replication. It is required during synthesis of the leading and lagging DNA strands at the replication fork and binds at/or near replication origins and moves along DNA with the replication fork. It has 3'-5' proofreading exonuclease activity that correct errors arising during DNA replication. It is also involved in DNA synthesis during DNA repair.</text>
</comment>
<comment type="subunit">
    <text evidence="2">DNA polymerase epsilon is a heterotetramer consisting of POL2, DPB2, DPB3 and DPB4.</text>
</comment>
<comment type="interaction">
    <interactant intactId="EBI-6076">
        <id>P27344</id>
    </interactant>
    <interactant intactId="EBI-29938">
        <id>Q04603</id>
        <label>DPB4</label>
    </interactant>
    <organismsDiffer>false</organismsDiffer>
    <experiments>3</experiments>
</comment>
<comment type="subcellular location">
    <subcellularLocation>
        <location evidence="2">Nucleus</location>
    </subcellularLocation>
</comment>
<comment type="miscellaneous">
    <text>In eukaryotes there are five DNA polymerases: alpha, beta, gamma, delta, and epsilon which are responsible for different reactions of DNA synthesis.</text>
</comment>
<comment type="miscellaneous">
    <text evidence="4">Present with 784 molecules/cell in log phase SD medium.</text>
</comment>
<accession>P27344</accession>
<accession>D6VQS3</accession>
<protein>
    <recommendedName>
        <fullName>DNA polymerase epsilon subunit C</fullName>
    </recommendedName>
    <alternativeName>
        <fullName>DNA polymerase II subunit C</fullName>
    </alternativeName>
</protein>
<name>DPB3_YEAST</name>
<dbReference type="EMBL" id="X58500">
    <property type="protein sequence ID" value="CAA41403.1"/>
    <property type="molecule type" value="Genomic_DNA"/>
</dbReference>
<dbReference type="EMBL" id="X76053">
    <property type="protein sequence ID" value="CAA53641.1"/>
    <property type="molecule type" value="Genomic_DNA"/>
</dbReference>
<dbReference type="EMBL" id="Z36146">
    <property type="protein sequence ID" value="CAA85242.1"/>
    <property type="molecule type" value="Genomic_DNA"/>
</dbReference>
<dbReference type="EMBL" id="BK006936">
    <property type="protein sequence ID" value="DAA07393.1"/>
    <property type="molecule type" value="Genomic_DNA"/>
</dbReference>
<dbReference type="PIR" id="S44540">
    <property type="entry name" value="S44540"/>
</dbReference>
<dbReference type="RefSeq" id="NP_009837.1">
    <property type="nucleotide sequence ID" value="NM_001178626.1"/>
</dbReference>
<dbReference type="PDB" id="6WJV">
    <property type="method" value="EM"/>
    <property type="resolution" value="3.50 A"/>
    <property type="chains" value="3=1-201"/>
</dbReference>
<dbReference type="PDBsum" id="6WJV"/>
<dbReference type="EMDB" id="EMD-21701"/>
<dbReference type="SMR" id="P27344"/>
<dbReference type="BioGRID" id="32972">
    <property type="interactions" value="314"/>
</dbReference>
<dbReference type="ComplexPortal" id="CPX-2110">
    <property type="entry name" value="DNA polymerase epsilon complex"/>
</dbReference>
<dbReference type="DIP" id="DIP-4803N"/>
<dbReference type="FunCoup" id="P27344">
    <property type="interactions" value="125"/>
</dbReference>
<dbReference type="IntAct" id="P27344">
    <property type="interactions" value="17"/>
</dbReference>
<dbReference type="MINT" id="P27344"/>
<dbReference type="STRING" id="4932.YBR278W"/>
<dbReference type="iPTMnet" id="P27344"/>
<dbReference type="PaxDb" id="4932-YBR278W"/>
<dbReference type="PeptideAtlas" id="P27344"/>
<dbReference type="EnsemblFungi" id="YBR278W_mRNA">
    <property type="protein sequence ID" value="YBR278W"/>
    <property type="gene ID" value="YBR278W"/>
</dbReference>
<dbReference type="GeneID" id="852580"/>
<dbReference type="KEGG" id="sce:YBR278W"/>
<dbReference type="AGR" id="SGD:S000000482"/>
<dbReference type="SGD" id="S000000482">
    <property type="gene designation" value="DPB3"/>
</dbReference>
<dbReference type="VEuPathDB" id="FungiDB:YBR278W"/>
<dbReference type="eggNOG" id="KOG1658">
    <property type="taxonomic scope" value="Eukaryota"/>
</dbReference>
<dbReference type="GeneTree" id="ENSGT00940000166127"/>
<dbReference type="HOGENOM" id="CLU_1332610_0_0_1"/>
<dbReference type="InParanoid" id="P27344"/>
<dbReference type="OMA" id="AKCDPEH"/>
<dbReference type="OrthoDB" id="636685at2759"/>
<dbReference type="BioCyc" id="YEAST:G3O-29198-MONOMER"/>
<dbReference type="Reactome" id="R-SCE-5656169">
    <property type="pathway name" value="Termination of translesion DNA synthesis"/>
</dbReference>
<dbReference type="Reactome" id="R-SCE-6782135">
    <property type="pathway name" value="Dual incision in TC-NER"/>
</dbReference>
<dbReference type="Reactome" id="R-SCE-68952">
    <property type="pathway name" value="DNA replication initiation"/>
</dbReference>
<dbReference type="Reactome" id="R-SCE-68962">
    <property type="pathway name" value="Activation of the pre-replicative complex"/>
</dbReference>
<dbReference type="BioGRID-ORCS" id="852580">
    <property type="hits" value="1 hit in 10 CRISPR screens"/>
</dbReference>
<dbReference type="PRO" id="PR:P27344"/>
<dbReference type="Proteomes" id="UP000002311">
    <property type="component" value="Chromosome II"/>
</dbReference>
<dbReference type="RNAct" id="P27344">
    <property type="molecule type" value="protein"/>
</dbReference>
<dbReference type="GO" id="GO:0008623">
    <property type="term" value="C:CHRAC"/>
    <property type="evidence" value="ECO:0000318"/>
    <property type="project" value="GO_Central"/>
</dbReference>
<dbReference type="GO" id="GO:0008622">
    <property type="term" value="C:epsilon DNA polymerase complex"/>
    <property type="evidence" value="ECO:0000314"/>
    <property type="project" value="SGD"/>
</dbReference>
<dbReference type="GO" id="GO:0043596">
    <property type="term" value="C:nuclear replication fork"/>
    <property type="evidence" value="ECO:0000314"/>
    <property type="project" value="ComplexPortal"/>
</dbReference>
<dbReference type="GO" id="GO:0005634">
    <property type="term" value="C:nucleus"/>
    <property type="evidence" value="ECO:0000318"/>
    <property type="project" value="GO_Central"/>
</dbReference>
<dbReference type="GO" id="GO:0046982">
    <property type="term" value="F:protein heterodimerization activity"/>
    <property type="evidence" value="ECO:0007669"/>
    <property type="project" value="InterPro"/>
</dbReference>
<dbReference type="GO" id="GO:0006261">
    <property type="term" value="P:DNA-templated DNA replication"/>
    <property type="evidence" value="ECO:0000314"/>
    <property type="project" value="SGD"/>
</dbReference>
<dbReference type="GO" id="GO:0042276">
    <property type="term" value="P:error-prone translesion synthesis"/>
    <property type="evidence" value="ECO:0000314"/>
    <property type="project" value="SGD"/>
</dbReference>
<dbReference type="GO" id="GO:0006272">
    <property type="term" value="P:leading strand elongation"/>
    <property type="evidence" value="ECO:0000315"/>
    <property type="project" value="SGD"/>
</dbReference>
<dbReference type="CDD" id="cd22929">
    <property type="entry name" value="HFD_POLE4-like"/>
    <property type="match status" value="1"/>
</dbReference>
<dbReference type="FunFam" id="1.10.20.10:FF:000121">
    <property type="entry name" value="DNA polymerase II third subunit"/>
    <property type="match status" value="1"/>
</dbReference>
<dbReference type="Gene3D" id="1.10.20.10">
    <property type="entry name" value="Histone, subunit A"/>
    <property type="match status" value="1"/>
</dbReference>
<dbReference type="InterPro" id="IPR009072">
    <property type="entry name" value="Histone-fold"/>
</dbReference>
<dbReference type="InterPro" id="IPR050568">
    <property type="entry name" value="Transcr_DNA_Rep_Reg"/>
</dbReference>
<dbReference type="PANTHER" id="PTHR10252:SF54">
    <property type="entry name" value="CHROMATIN ACCESSIBILITY COMPLEX PROTEIN 1"/>
    <property type="match status" value="1"/>
</dbReference>
<dbReference type="PANTHER" id="PTHR10252">
    <property type="entry name" value="HISTONE-LIKE TRANSCRIPTION FACTOR CCAAT-RELATED"/>
    <property type="match status" value="1"/>
</dbReference>
<dbReference type="SUPFAM" id="SSF47113">
    <property type="entry name" value="Histone-fold"/>
    <property type="match status" value="1"/>
</dbReference>